<keyword id="KW-0963">Cytoplasm</keyword>
<keyword id="KW-0269">Exonuclease</keyword>
<keyword id="KW-0378">Hydrolase</keyword>
<keyword id="KW-0540">Nuclease</keyword>
<accession>Q5PFR8</accession>
<protein>
    <recommendedName>
        <fullName evidence="2">Exodeoxyribonuclease 7 small subunit</fullName>
        <ecNumber evidence="2">3.1.11.6</ecNumber>
    </recommendedName>
    <alternativeName>
        <fullName evidence="2">Exodeoxyribonuclease VII small subunit</fullName>
        <shortName evidence="2">Exonuclease VII small subunit</shortName>
    </alternativeName>
</protein>
<organism>
    <name type="scientific">Salmonella paratyphi A (strain ATCC 9150 / SARB42)</name>
    <dbReference type="NCBI Taxonomy" id="295319"/>
    <lineage>
        <taxon>Bacteria</taxon>
        <taxon>Pseudomonadati</taxon>
        <taxon>Pseudomonadota</taxon>
        <taxon>Gammaproteobacteria</taxon>
        <taxon>Enterobacterales</taxon>
        <taxon>Enterobacteriaceae</taxon>
        <taxon>Salmonella</taxon>
    </lineage>
</organism>
<proteinExistence type="inferred from homology"/>
<reference key="1">
    <citation type="journal article" date="2004" name="Nat. Genet.">
        <title>Comparison of genome degradation in Paratyphi A and Typhi, human-restricted serovars of Salmonella enterica that cause typhoid.</title>
        <authorList>
            <person name="McClelland M."/>
            <person name="Sanderson K.E."/>
            <person name="Clifton S.W."/>
            <person name="Latreille P."/>
            <person name="Porwollik S."/>
            <person name="Sabo A."/>
            <person name="Meyer R."/>
            <person name="Bieri T."/>
            <person name="Ozersky P."/>
            <person name="McLellan M."/>
            <person name="Harkins C.R."/>
            <person name="Wang C."/>
            <person name="Nguyen C."/>
            <person name="Berghoff A."/>
            <person name="Elliott G."/>
            <person name="Kohlberg S."/>
            <person name="Strong C."/>
            <person name="Du F."/>
            <person name="Carter J."/>
            <person name="Kremizki C."/>
            <person name="Layman D."/>
            <person name="Leonard S."/>
            <person name="Sun H."/>
            <person name="Fulton L."/>
            <person name="Nash W."/>
            <person name="Miner T."/>
            <person name="Minx P."/>
            <person name="Delehaunty K."/>
            <person name="Fronick C."/>
            <person name="Magrini V."/>
            <person name="Nhan M."/>
            <person name="Warren W."/>
            <person name="Florea L."/>
            <person name="Spieth J."/>
            <person name="Wilson R.K."/>
        </authorList>
    </citation>
    <scope>NUCLEOTIDE SEQUENCE [LARGE SCALE GENOMIC DNA]</scope>
    <source>
        <strain>ATCC 9150 / SARB42</strain>
    </source>
</reference>
<dbReference type="EC" id="3.1.11.6" evidence="2"/>
<dbReference type="EMBL" id="CP000026">
    <property type="protein sequence ID" value="AAV78184.1"/>
    <property type="molecule type" value="Genomic_DNA"/>
</dbReference>
<dbReference type="RefSeq" id="WP_001124944.1">
    <property type="nucleotide sequence ID" value="NC_006511.1"/>
</dbReference>
<dbReference type="SMR" id="Q5PFR8"/>
<dbReference type="KEGG" id="spt:SPA2299"/>
<dbReference type="HOGENOM" id="CLU_145918_3_3_6"/>
<dbReference type="Proteomes" id="UP000008185">
    <property type="component" value="Chromosome"/>
</dbReference>
<dbReference type="GO" id="GO:0005829">
    <property type="term" value="C:cytosol"/>
    <property type="evidence" value="ECO:0007669"/>
    <property type="project" value="TreeGrafter"/>
</dbReference>
<dbReference type="GO" id="GO:0009318">
    <property type="term" value="C:exodeoxyribonuclease VII complex"/>
    <property type="evidence" value="ECO:0007669"/>
    <property type="project" value="InterPro"/>
</dbReference>
<dbReference type="GO" id="GO:0008855">
    <property type="term" value="F:exodeoxyribonuclease VII activity"/>
    <property type="evidence" value="ECO:0007669"/>
    <property type="project" value="UniProtKB-UniRule"/>
</dbReference>
<dbReference type="GO" id="GO:0006308">
    <property type="term" value="P:DNA catabolic process"/>
    <property type="evidence" value="ECO:0007669"/>
    <property type="project" value="UniProtKB-UniRule"/>
</dbReference>
<dbReference type="FunFam" id="1.10.287.1040:FF:000001">
    <property type="entry name" value="Exodeoxyribonuclease 7 small subunit"/>
    <property type="match status" value="1"/>
</dbReference>
<dbReference type="Gene3D" id="1.10.287.1040">
    <property type="entry name" value="Exonuclease VII, small subunit"/>
    <property type="match status" value="1"/>
</dbReference>
<dbReference type="HAMAP" id="MF_00337">
    <property type="entry name" value="Exonuc_7_S"/>
    <property type="match status" value="1"/>
</dbReference>
<dbReference type="InterPro" id="IPR003761">
    <property type="entry name" value="Exonuc_VII_S"/>
</dbReference>
<dbReference type="InterPro" id="IPR037004">
    <property type="entry name" value="Exonuc_VII_ssu_sf"/>
</dbReference>
<dbReference type="NCBIfam" id="NF002137">
    <property type="entry name" value="PRK00977.1-1"/>
    <property type="match status" value="1"/>
</dbReference>
<dbReference type="NCBIfam" id="NF002140">
    <property type="entry name" value="PRK00977.1-4"/>
    <property type="match status" value="1"/>
</dbReference>
<dbReference type="NCBIfam" id="TIGR01280">
    <property type="entry name" value="xseB"/>
    <property type="match status" value="1"/>
</dbReference>
<dbReference type="PANTHER" id="PTHR34137">
    <property type="entry name" value="EXODEOXYRIBONUCLEASE 7 SMALL SUBUNIT"/>
    <property type="match status" value="1"/>
</dbReference>
<dbReference type="PANTHER" id="PTHR34137:SF1">
    <property type="entry name" value="EXODEOXYRIBONUCLEASE 7 SMALL SUBUNIT"/>
    <property type="match status" value="1"/>
</dbReference>
<dbReference type="Pfam" id="PF02609">
    <property type="entry name" value="Exonuc_VII_S"/>
    <property type="match status" value="1"/>
</dbReference>
<dbReference type="PIRSF" id="PIRSF006488">
    <property type="entry name" value="Exonuc_VII_S"/>
    <property type="match status" value="1"/>
</dbReference>
<dbReference type="SUPFAM" id="SSF116842">
    <property type="entry name" value="XseB-like"/>
    <property type="match status" value="1"/>
</dbReference>
<feature type="initiator methionine" description="Removed" evidence="1">
    <location>
        <position position="1"/>
    </location>
</feature>
<feature type="chain" id="PRO_0000206998" description="Exodeoxyribonuclease 7 small subunit">
    <location>
        <begin position="2"/>
        <end position="80"/>
    </location>
</feature>
<evidence type="ECO:0000250" key="1"/>
<evidence type="ECO:0000255" key="2">
    <source>
        <dbReference type="HAMAP-Rule" id="MF_00337"/>
    </source>
</evidence>
<comment type="function">
    <text evidence="2">Bidirectionally degrades single-stranded DNA into large acid-insoluble oligonucleotides, which are then degraded further into small acid-soluble oligonucleotides.</text>
</comment>
<comment type="catalytic activity">
    <reaction evidence="2">
        <text>Exonucleolytic cleavage in either 5'- to 3'- or 3'- to 5'-direction to yield nucleoside 5'-phosphates.</text>
        <dbReference type="EC" id="3.1.11.6"/>
    </reaction>
</comment>
<comment type="subunit">
    <text evidence="2">Heterooligomer composed of large and small subunits.</text>
</comment>
<comment type="subcellular location">
    <subcellularLocation>
        <location evidence="2">Cytoplasm</location>
    </subcellularLocation>
</comment>
<comment type="similarity">
    <text evidence="2">Belongs to the XseB family.</text>
</comment>
<sequence length="80" mass="8932">MPKKNEAPASFETALSELEHIVTRLESGDLPLEDALNEFERGVQLARQGQAKLQQAEQRVQILLSDNEEASPEPFIADNE</sequence>
<name>EX7S_SALPA</name>
<gene>
    <name evidence="2" type="primary">xseB</name>
    <name type="ordered locus">SPA2299</name>
</gene>